<feature type="chain" id="PRO_0000123241" description="Small ribosomal subunit protein uS11">
    <location>
        <begin position="1"/>
        <end position="130"/>
    </location>
</feature>
<feature type="region of interest" description="Disordered" evidence="2">
    <location>
        <begin position="1"/>
        <end position="21"/>
    </location>
</feature>
<feature type="compositionally biased region" description="Basic residues" evidence="2">
    <location>
        <begin position="1"/>
        <end position="15"/>
    </location>
</feature>
<sequence>MARPTKKSGPRKQKRNVPSGVAHIQSTFNNTIVSIADPAGEVISWASAGSSGFKGAKKGTPFAAQTAAEAAARRAIDQGMRQLEVMVSGPGSGRETAIRALQSAGLEITLIRDVTPIPHNGCRPPKRRRV</sequence>
<proteinExistence type="inferred from homology"/>
<dbReference type="EMBL" id="AB000111">
    <property type="protein sequence ID" value="BAA22471.1"/>
    <property type="molecule type" value="Genomic_DNA"/>
</dbReference>
<dbReference type="EMBL" id="AP008231">
    <property type="protein sequence ID" value="BAD80077.1"/>
    <property type="molecule type" value="Genomic_DNA"/>
</dbReference>
<dbReference type="RefSeq" id="WP_011244197.1">
    <property type="nucleotide sequence ID" value="NZ_CP085785.1"/>
</dbReference>
<dbReference type="SMR" id="O24709"/>
<dbReference type="GeneID" id="72431093"/>
<dbReference type="KEGG" id="syc:syc1887_d"/>
<dbReference type="eggNOG" id="COG0100">
    <property type="taxonomic scope" value="Bacteria"/>
</dbReference>
<dbReference type="Proteomes" id="UP000001175">
    <property type="component" value="Chromosome"/>
</dbReference>
<dbReference type="GO" id="GO:1990904">
    <property type="term" value="C:ribonucleoprotein complex"/>
    <property type="evidence" value="ECO:0007669"/>
    <property type="project" value="UniProtKB-KW"/>
</dbReference>
<dbReference type="GO" id="GO:0005840">
    <property type="term" value="C:ribosome"/>
    <property type="evidence" value="ECO:0007669"/>
    <property type="project" value="UniProtKB-KW"/>
</dbReference>
<dbReference type="GO" id="GO:0019843">
    <property type="term" value="F:rRNA binding"/>
    <property type="evidence" value="ECO:0007669"/>
    <property type="project" value="UniProtKB-UniRule"/>
</dbReference>
<dbReference type="GO" id="GO:0003735">
    <property type="term" value="F:structural constituent of ribosome"/>
    <property type="evidence" value="ECO:0007669"/>
    <property type="project" value="InterPro"/>
</dbReference>
<dbReference type="GO" id="GO:0006412">
    <property type="term" value="P:translation"/>
    <property type="evidence" value="ECO:0007669"/>
    <property type="project" value="UniProtKB-UniRule"/>
</dbReference>
<dbReference type="FunFam" id="3.30.420.80:FF:000001">
    <property type="entry name" value="30S ribosomal protein S11"/>
    <property type="match status" value="1"/>
</dbReference>
<dbReference type="Gene3D" id="3.30.420.80">
    <property type="entry name" value="Ribosomal protein S11"/>
    <property type="match status" value="1"/>
</dbReference>
<dbReference type="HAMAP" id="MF_01310">
    <property type="entry name" value="Ribosomal_uS11"/>
    <property type="match status" value="1"/>
</dbReference>
<dbReference type="InterPro" id="IPR001971">
    <property type="entry name" value="Ribosomal_uS11"/>
</dbReference>
<dbReference type="InterPro" id="IPR019981">
    <property type="entry name" value="Ribosomal_uS11_bac-type"/>
</dbReference>
<dbReference type="InterPro" id="IPR018102">
    <property type="entry name" value="Ribosomal_uS11_CS"/>
</dbReference>
<dbReference type="InterPro" id="IPR036967">
    <property type="entry name" value="Ribosomal_uS11_sf"/>
</dbReference>
<dbReference type="NCBIfam" id="NF003698">
    <property type="entry name" value="PRK05309.1"/>
    <property type="match status" value="1"/>
</dbReference>
<dbReference type="NCBIfam" id="TIGR03632">
    <property type="entry name" value="uS11_bact"/>
    <property type="match status" value="1"/>
</dbReference>
<dbReference type="PANTHER" id="PTHR11759">
    <property type="entry name" value="40S RIBOSOMAL PROTEIN S14/30S RIBOSOMAL PROTEIN S11"/>
    <property type="match status" value="1"/>
</dbReference>
<dbReference type="Pfam" id="PF00411">
    <property type="entry name" value="Ribosomal_S11"/>
    <property type="match status" value="1"/>
</dbReference>
<dbReference type="PIRSF" id="PIRSF002131">
    <property type="entry name" value="Ribosomal_S11"/>
    <property type="match status" value="1"/>
</dbReference>
<dbReference type="SUPFAM" id="SSF53137">
    <property type="entry name" value="Translational machinery components"/>
    <property type="match status" value="1"/>
</dbReference>
<dbReference type="PROSITE" id="PS00054">
    <property type="entry name" value="RIBOSOMAL_S11"/>
    <property type="match status" value="1"/>
</dbReference>
<accession>O24709</accession>
<name>RS11_SYNP6</name>
<gene>
    <name evidence="1" type="primary">rpsK</name>
    <name evidence="1" type="synonym">rps11</name>
    <name type="ordered locus">syc1887_d</name>
</gene>
<organism>
    <name type="scientific">Synechococcus sp. (strain ATCC 27144 / PCC 6301 / SAUG 1402/1)</name>
    <name type="common">Anacystis nidulans</name>
    <dbReference type="NCBI Taxonomy" id="269084"/>
    <lineage>
        <taxon>Bacteria</taxon>
        <taxon>Bacillati</taxon>
        <taxon>Cyanobacteriota</taxon>
        <taxon>Cyanophyceae</taxon>
        <taxon>Synechococcales</taxon>
        <taxon>Synechococcaceae</taxon>
        <taxon>Synechococcus</taxon>
    </lineage>
</organism>
<comment type="function">
    <text evidence="1">Located on the platform of the 30S subunit, it bridges several disparate RNA helices of the 16S rRNA. Forms part of the Shine-Dalgarno cleft in the 70S ribosome.</text>
</comment>
<comment type="subunit">
    <text evidence="1">Part of the 30S ribosomal subunit. Interacts with proteins S7 and S18. Binds to IF-3.</text>
</comment>
<comment type="similarity">
    <text evidence="1">Belongs to the universal ribosomal protein uS11 family.</text>
</comment>
<evidence type="ECO:0000255" key="1">
    <source>
        <dbReference type="HAMAP-Rule" id="MF_01310"/>
    </source>
</evidence>
<evidence type="ECO:0000256" key="2">
    <source>
        <dbReference type="SAM" id="MobiDB-lite"/>
    </source>
</evidence>
<evidence type="ECO:0000305" key="3"/>
<protein>
    <recommendedName>
        <fullName evidence="1">Small ribosomal subunit protein uS11</fullName>
    </recommendedName>
    <alternativeName>
        <fullName evidence="3">30S ribosomal protein S11</fullName>
    </alternativeName>
</protein>
<keyword id="KW-0687">Ribonucleoprotein</keyword>
<keyword id="KW-0689">Ribosomal protein</keyword>
<keyword id="KW-0694">RNA-binding</keyword>
<keyword id="KW-0699">rRNA-binding</keyword>
<reference key="1">
    <citation type="journal article" date="1997" name="Gene">
        <title>Organization of a large gene cluster encoding ribosomal proteins in the cyanobacterium Synechococcus sp. strain PCC 6301: comparison of gene clusters among cyanobacteria, eubacteria and chloroplast genomes.</title>
        <authorList>
            <person name="Sugita M."/>
            <person name="Sugishita H."/>
            <person name="Fujishiro T."/>
            <person name="Tsuboi M."/>
            <person name="Sugita C."/>
            <person name="Endo T."/>
            <person name="Sugiura M."/>
        </authorList>
    </citation>
    <scope>NUCLEOTIDE SEQUENCE [GENOMIC DNA]</scope>
</reference>
<reference key="2">
    <citation type="journal article" date="2007" name="Photosyn. Res.">
        <title>Complete nucleotide sequence of the freshwater unicellular cyanobacterium Synechococcus elongatus PCC 6301 chromosome: gene content and organization.</title>
        <authorList>
            <person name="Sugita C."/>
            <person name="Ogata K."/>
            <person name="Shikata M."/>
            <person name="Jikuya H."/>
            <person name="Takano J."/>
            <person name="Furumichi M."/>
            <person name="Kanehisa M."/>
            <person name="Omata T."/>
            <person name="Sugiura M."/>
            <person name="Sugita M."/>
        </authorList>
    </citation>
    <scope>NUCLEOTIDE SEQUENCE [LARGE SCALE GENOMIC DNA]</scope>
    <source>
        <strain>ATCC 27144 / PCC 6301 / SAUG 1402/1</strain>
    </source>
</reference>